<accession>Q9JLT7</accession>
<accession>Q99PA4</accession>
<feature type="chain" id="PRO_0000013493" description="Retinal homeobox protein Rx">
    <location>
        <begin position="1"/>
        <end position="342"/>
    </location>
</feature>
<feature type="DNA-binding region" description="Homeobox" evidence="3">
    <location>
        <begin position="137"/>
        <end position="196"/>
    </location>
</feature>
<feature type="region of interest" description="Disordered" evidence="5">
    <location>
        <begin position="49"/>
        <end position="141"/>
    </location>
</feature>
<feature type="region of interest" description="Disordered" evidence="5">
    <location>
        <begin position="209"/>
        <end position="295"/>
    </location>
</feature>
<feature type="short sequence motif" description="Octapeptide motif">
    <location>
        <begin position="33"/>
        <end position="40"/>
    </location>
</feature>
<feature type="short sequence motif" description="OAR" evidence="4">
    <location>
        <begin position="319"/>
        <end position="332"/>
    </location>
</feature>
<feature type="short sequence motif" description="Nuclear localization signal" evidence="2">
    <location>
        <begin position="325"/>
        <end position="329"/>
    </location>
</feature>
<feature type="compositionally biased region" description="Basic and acidic residues" evidence="5">
    <location>
        <begin position="55"/>
        <end position="67"/>
    </location>
</feature>
<feature type="compositionally biased region" description="Low complexity" evidence="5">
    <location>
        <begin position="209"/>
        <end position="225"/>
    </location>
</feature>
<feature type="compositionally biased region" description="Low complexity" evidence="5">
    <location>
        <begin position="235"/>
        <end position="244"/>
    </location>
</feature>
<feature type="splice variant" id="VSP_018806" description="In isoform Short." evidence="6">
    <location>
        <begin position="1"/>
        <end position="9"/>
    </location>
</feature>
<reference key="1">
    <citation type="submission" date="2000-11" db="EMBL/GenBank/DDBJ databases">
        <title>The eyeless mouse mutation (ey1) removes an alternative start codon from the Rx/rax homeobox gene and acts as a hypomorphic allele.</title>
        <authorList>
            <person name="Tucker P."/>
            <person name="Laemle L."/>
            <person name="Munson A."/>
            <person name="Kanekar S."/>
            <person name="Schlecht H."/>
            <person name="Vetter M."/>
            <person name="Glaser T."/>
        </authorList>
    </citation>
    <scope>NUCLEOTIDE SEQUENCE</scope>
    <scope>ALTERNATIVE INITIATION</scope>
    <source>
        <strain>Sprague-Dawley</strain>
    </source>
</reference>
<reference key="2">
    <citation type="submission" date="1999-03" db="EMBL/GenBank/DDBJ databases">
        <title>Transcription factor cascade for neural progenitor differentiation into retinal neuron.</title>
        <authorList>
            <person name="Nishida K."/>
            <person name="Gage F.H."/>
        </authorList>
    </citation>
    <scope>NUCLEOTIDE SEQUENCE</scope>
</reference>
<evidence type="ECO:0000250" key="1"/>
<evidence type="ECO:0000255" key="2"/>
<evidence type="ECO:0000255" key="3">
    <source>
        <dbReference type="PROSITE-ProRule" id="PRU00108"/>
    </source>
</evidence>
<evidence type="ECO:0000255" key="4">
    <source>
        <dbReference type="PROSITE-ProRule" id="PRU00138"/>
    </source>
</evidence>
<evidence type="ECO:0000256" key="5">
    <source>
        <dbReference type="SAM" id="MobiDB-lite"/>
    </source>
</evidence>
<evidence type="ECO:0000305" key="6"/>
<comment type="function">
    <text evidence="1">Plays a critical role in eye formation by regulating the initial specification of retinal cells and/or their subsequent proliferation. Binds to the photoreceptor conserved element-I (PCE-1/Ret 1) in the photoreceptor cell-specific arrestin promoter (By similarity).</text>
</comment>
<comment type="subcellular location">
    <subcellularLocation>
        <location>Nucleus</location>
    </subcellularLocation>
</comment>
<comment type="alternative products">
    <event type="alternative initiation"/>
    <isoform>
        <id>Q9JLT7-1</id>
        <name>Long</name>
        <sequence type="displayed"/>
    </isoform>
    <isoform>
        <id>Q9JLT7-2</id>
        <name>Short</name>
        <sequence type="described" ref="VSP_018806"/>
    </isoform>
</comment>
<comment type="similarity">
    <text evidence="6">Belongs to the paired homeobox family. Bicoid subfamily.</text>
</comment>
<gene>
    <name type="primary">Rax</name>
    <name type="synonym">Rx</name>
</gene>
<protein>
    <recommendedName>
        <fullName>Retinal homeobox protein Rx</fullName>
    </recommendedName>
    <alternativeName>
        <fullName>Retina and anterior neural fold homeobox protein</fullName>
    </alternativeName>
</protein>
<dbReference type="EMBL" id="AF320225">
    <property type="protein sequence ID" value="AAK07422.1"/>
    <property type="molecule type" value="Genomic_DNA"/>
</dbReference>
<dbReference type="EMBL" id="AF320224">
    <property type="protein sequence ID" value="AAK07422.1"/>
    <property type="status" value="JOINED"/>
    <property type="molecule type" value="Genomic_DNA"/>
</dbReference>
<dbReference type="EMBL" id="AF320225">
    <property type="protein sequence ID" value="AAK07423.1"/>
    <property type="molecule type" value="Genomic_DNA"/>
</dbReference>
<dbReference type="EMBL" id="AF320224">
    <property type="protein sequence ID" value="AAK07423.1"/>
    <property type="status" value="JOINED"/>
    <property type="molecule type" value="Genomic_DNA"/>
</dbReference>
<dbReference type="EMBL" id="AF135839">
    <property type="protein sequence ID" value="AAF61631.1"/>
    <property type="molecule type" value="mRNA"/>
</dbReference>
<dbReference type="RefSeq" id="NP_446130.1">
    <molecule id="Q9JLT7-1"/>
    <property type="nucleotide sequence ID" value="NM_053678.2"/>
</dbReference>
<dbReference type="SMR" id="Q9JLT7"/>
<dbReference type="FunCoup" id="Q9JLT7">
    <property type="interactions" value="11"/>
</dbReference>
<dbReference type="STRING" id="10116.ENSRNOP00000022785"/>
<dbReference type="PhosphoSitePlus" id="Q9JLT7"/>
<dbReference type="PaxDb" id="10116-ENSRNOP00000022785"/>
<dbReference type="Ensembl" id="ENSRNOT00000022784.6">
    <molecule id="Q9JLT7-1"/>
    <property type="protein sequence ID" value="ENSRNOP00000022785.6"/>
    <property type="gene ID" value="ENSRNOG00000016944.7"/>
</dbReference>
<dbReference type="GeneID" id="114213"/>
<dbReference type="KEGG" id="rno:114213"/>
<dbReference type="UCSC" id="RGD:620371">
    <molecule id="Q9JLT7-1"/>
    <property type="organism name" value="rat"/>
</dbReference>
<dbReference type="AGR" id="RGD:620371"/>
<dbReference type="CTD" id="30062"/>
<dbReference type="RGD" id="620371">
    <property type="gene designation" value="Rax"/>
</dbReference>
<dbReference type="eggNOG" id="KOG0490">
    <property type="taxonomic scope" value="Eukaryota"/>
</dbReference>
<dbReference type="GeneTree" id="ENSGT00940000162144"/>
<dbReference type="InParanoid" id="Q9JLT7"/>
<dbReference type="OMA" id="VMMMDER"/>
<dbReference type="OrthoDB" id="6159439at2759"/>
<dbReference type="PhylomeDB" id="Q9JLT7"/>
<dbReference type="PRO" id="PR:Q9JLT7"/>
<dbReference type="Proteomes" id="UP000002494">
    <property type="component" value="Chromosome 18"/>
</dbReference>
<dbReference type="GO" id="GO:0005634">
    <property type="term" value="C:nucleus"/>
    <property type="evidence" value="ECO:0007669"/>
    <property type="project" value="UniProtKB-SubCell"/>
</dbReference>
<dbReference type="GO" id="GO:0001228">
    <property type="term" value="F:DNA-binding transcription activator activity, RNA polymerase II-specific"/>
    <property type="evidence" value="ECO:0000266"/>
    <property type="project" value="RGD"/>
</dbReference>
<dbReference type="GO" id="GO:0000981">
    <property type="term" value="F:DNA-binding transcription factor activity, RNA polymerase II-specific"/>
    <property type="evidence" value="ECO:0000318"/>
    <property type="project" value="GO_Central"/>
</dbReference>
<dbReference type="GO" id="GO:0000978">
    <property type="term" value="F:RNA polymerase II cis-regulatory region sequence-specific DNA binding"/>
    <property type="evidence" value="ECO:0000266"/>
    <property type="project" value="RGD"/>
</dbReference>
<dbReference type="GO" id="GO:1990837">
    <property type="term" value="F:sequence-specific double-stranded DNA binding"/>
    <property type="evidence" value="ECO:0000266"/>
    <property type="project" value="RGD"/>
</dbReference>
<dbReference type="GO" id="GO:0007420">
    <property type="term" value="P:brain development"/>
    <property type="evidence" value="ECO:0000266"/>
    <property type="project" value="RGD"/>
</dbReference>
<dbReference type="GO" id="GO:0043010">
    <property type="term" value="P:camera-type eye development"/>
    <property type="evidence" value="ECO:0000266"/>
    <property type="project" value="RGD"/>
</dbReference>
<dbReference type="GO" id="GO:0021854">
    <property type="term" value="P:hypothalamus development"/>
    <property type="evidence" value="ECO:0000266"/>
    <property type="project" value="RGD"/>
</dbReference>
<dbReference type="GO" id="GO:0060173">
    <property type="term" value="P:limb development"/>
    <property type="evidence" value="ECO:0000266"/>
    <property type="project" value="RGD"/>
</dbReference>
<dbReference type="GO" id="GO:0007389">
    <property type="term" value="P:pattern specification process"/>
    <property type="evidence" value="ECO:0000266"/>
    <property type="project" value="RGD"/>
</dbReference>
<dbReference type="GO" id="GO:0045944">
    <property type="term" value="P:positive regulation of transcription by RNA polymerase II"/>
    <property type="evidence" value="ECO:0000266"/>
    <property type="project" value="RGD"/>
</dbReference>
<dbReference type="GO" id="GO:0006357">
    <property type="term" value="P:regulation of transcription by RNA polymerase II"/>
    <property type="evidence" value="ECO:0000318"/>
    <property type="project" value="GO_Central"/>
</dbReference>
<dbReference type="CDD" id="cd00086">
    <property type="entry name" value="homeodomain"/>
    <property type="match status" value="1"/>
</dbReference>
<dbReference type="FunFam" id="1.10.10.60:FF:000071">
    <property type="entry name" value="Retinal homeobox gene 2"/>
    <property type="match status" value="1"/>
</dbReference>
<dbReference type="Gene3D" id="1.10.10.60">
    <property type="entry name" value="Homeodomain-like"/>
    <property type="match status" value="1"/>
</dbReference>
<dbReference type="InterPro" id="IPR001356">
    <property type="entry name" value="HD"/>
</dbReference>
<dbReference type="InterPro" id="IPR017970">
    <property type="entry name" value="Homeobox_CS"/>
</dbReference>
<dbReference type="InterPro" id="IPR009057">
    <property type="entry name" value="Homeodomain-like_sf"/>
</dbReference>
<dbReference type="InterPro" id="IPR003654">
    <property type="entry name" value="OAR_dom"/>
</dbReference>
<dbReference type="InterPro" id="IPR043562">
    <property type="entry name" value="RAX/RAX2"/>
</dbReference>
<dbReference type="PANTHER" id="PTHR46271">
    <property type="entry name" value="HOMEOBOX PROTEIN, PUTATIVE-RELATED"/>
    <property type="match status" value="1"/>
</dbReference>
<dbReference type="PANTHER" id="PTHR46271:SF3">
    <property type="entry name" value="RETINAL HOMEOBOX PROTEIN RX"/>
    <property type="match status" value="1"/>
</dbReference>
<dbReference type="Pfam" id="PF00046">
    <property type="entry name" value="Homeodomain"/>
    <property type="match status" value="1"/>
</dbReference>
<dbReference type="Pfam" id="PF03826">
    <property type="entry name" value="OAR"/>
    <property type="match status" value="1"/>
</dbReference>
<dbReference type="SMART" id="SM00389">
    <property type="entry name" value="HOX"/>
    <property type="match status" value="1"/>
</dbReference>
<dbReference type="SUPFAM" id="SSF46689">
    <property type="entry name" value="Homeodomain-like"/>
    <property type="match status" value="1"/>
</dbReference>
<dbReference type="PROSITE" id="PS00027">
    <property type="entry name" value="HOMEOBOX_1"/>
    <property type="match status" value="1"/>
</dbReference>
<dbReference type="PROSITE" id="PS50071">
    <property type="entry name" value="HOMEOBOX_2"/>
    <property type="match status" value="1"/>
</dbReference>
<dbReference type="PROSITE" id="PS50803">
    <property type="entry name" value="OAR"/>
    <property type="match status" value="1"/>
</dbReference>
<name>RX_RAT</name>
<organism>
    <name type="scientific">Rattus norvegicus</name>
    <name type="common">Rat</name>
    <dbReference type="NCBI Taxonomy" id="10116"/>
    <lineage>
        <taxon>Eukaryota</taxon>
        <taxon>Metazoa</taxon>
        <taxon>Chordata</taxon>
        <taxon>Craniata</taxon>
        <taxon>Vertebrata</taxon>
        <taxon>Euteleostomi</taxon>
        <taxon>Mammalia</taxon>
        <taxon>Eutheria</taxon>
        <taxon>Euarchontoglires</taxon>
        <taxon>Glires</taxon>
        <taxon>Rodentia</taxon>
        <taxon>Myomorpha</taxon>
        <taxon>Muroidea</taxon>
        <taxon>Muridae</taxon>
        <taxon>Murinae</taxon>
        <taxon>Rattus</taxon>
    </lineage>
</organism>
<proteinExistence type="evidence at transcript level"/>
<sequence>MHLPGCPPAMADGSFSLAGHLLRSPGGSTSRLHSIEAILGFTKEDGILDTFPAERSSRGSKERDPRLGARSACPKAPAGGSESSPPAAPGLVPEFEATRPCYPKEQGEARPSPGLPVGPAAGDSKLSEEEEPPKKKHRRNRTTFTTYQLHELERAFEKSHYPDVYSREELAGKVNLPEVRVQVWFQNRRAKWRRQEKLEVSSMKLQDSPLLSFSRSPPSSALAPLGGPGSGSGPPGSALPLEPWLGPPLPGGGATALQSLPGFGPPGQGLPASYTPPPPFLNSAPLGPGLQQLGPPPAYPCAPAFGDKFSLEEAYPRNSSIAALRLKAKEHIQAIGKPWQAL</sequence>
<keyword id="KW-0024">Alternative initiation</keyword>
<keyword id="KW-0217">Developmental protein</keyword>
<keyword id="KW-0238">DNA-binding</keyword>
<keyword id="KW-0371">Homeobox</keyword>
<keyword id="KW-0539">Nucleus</keyword>
<keyword id="KW-1185">Reference proteome</keyword>
<keyword id="KW-0804">Transcription</keyword>
<keyword id="KW-0805">Transcription regulation</keyword>